<dbReference type="EC" id="4.2.1.11" evidence="1"/>
<dbReference type="EMBL" id="CP000538">
    <property type="protein sequence ID" value="EAQ72679.1"/>
    <property type="molecule type" value="Genomic_DNA"/>
</dbReference>
<dbReference type="EMBL" id="U03121">
    <property type="protein sequence ID" value="AAA17794.1"/>
    <property type="molecule type" value="Genomic_DNA"/>
</dbReference>
<dbReference type="PIR" id="I40771">
    <property type="entry name" value="I40771"/>
</dbReference>
<dbReference type="RefSeq" id="WP_002856489.1">
    <property type="nucleotide sequence ID" value="NC_008787.1"/>
</dbReference>
<dbReference type="SMR" id="A1W1S4"/>
<dbReference type="KEGG" id="cjj:CJJ81176_1668"/>
<dbReference type="eggNOG" id="COG0148">
    <property type="taxonomic scope" value="Bacteria"/>
</dbReference>
<dbReference type="HOGENOM" id="CLU_031223_2_1_7"/>
<dbReference type="UniPathway" id="UPA00109">
    <property type="reaction ID" value="UER00187"/>
</dbReference>
<dbReference type="Proteomes" id="UP000000646">
    <property type="component" value="Chromosome"/>
</dbReference>
<dbReference type="GO" id="GO:0009986">
    <property type="term" value="C:cell surface"/>
    <property type="evidence" value="ECO:0007669"/>
    <property type="project" value="UniProtKB-SubCell"/>
</dbReference>
<dbReference type="GO" id="GO:0005576">
    <property type="term" value="C:extracellular region"/>
    <property type="evidence" value="ECO:0007669"/>
    <property type="project" value="UniProtKB-SubCell"/>
</dbReference>
<dbReference type="GO" id="GO:0000015">
    <property type="term" value="C:phosphopyruvate hydratase complex"/>
    <property type="evidence" value="ECO:0007669"/>
    <property type="project" value="InterPro"/>
</dbReference>
<dbReference type="GO" id="GO:0000287">
    <property type="term" value="F:magnesium ion binding"/>
    <property type="evidence" value="ECO:0007669"/>
    <property type="project" value="UniProtKB-UniRule"/>
</dbReference>
<dbReference type="GO" id="GO:0004634">
    <property type="term" value="F:phosphopyruvate hydratase activity"/>
    <property type="evidence" value="ECO:0007669"/>
    <property type="project" value="UniProtKB-UniRule"/>
</dbReference>
<dbReference type="GO" id="GO:0006096">
    <property type="term" value="P:glycolytic process"/>
    <property type="evidence" value="ECO:0007669"/>
    <property type="project" value="UniProtKB-UniRule"/>
</dbReference>
<dbReference type="CDD" id="cd03313">
    <property type="entry name" value="enolase"/>
    <property type="match status" value="1"/>
</dbReference>
<dbReference type="Gene3D" id="3.20.20.120">
    <property type="entry name" value="Enolase-like C-terminal domain"/>
    <property type="match status" value="1"/>
</dbReference>
<dbReference type="Gene3D" id="3.30.390.10">
    <property type="entry name" value="Enolase-like, N-terminal domain"/>
    <property type="match status" value="1"/>
</dbReference>
<dbReference type="HAMAP" id="MF_00318">
    <property type="entry name" value="Enolase"/>
    <property type="match status" value="1"/>
</dbReference>
<dbReference type="InterPro" id="IPR000941">
    <property type="entry name" value="Enolase"/>
</dbReference>
<dbReference type="InterPro" id="IPR036849">
    <property type="entry name" value="Enolase-like_C_sf"/>
</dbReference>
<dbReference type="InterPro" id="IPR029017">
    <property type="entry name" value="Enolase-like_N"/>
</dbReference>
<dbReference type="InterPro" id="IPR020810">
    <property type="entry name" value="Enolase_C"/>
</dbReference>
<dbReference type="InterPro" id="IPR020809">
    <property type="entry name" value="Enolase_CS"/>
</dbReference>
<dbReference type="InterPro" id="IPR020811">
    <property type="entry name" value="Enolase_N"/>
</dbReference>
<dbReference type="NCBIfam" id="TIGR01060">
    <property type="entry name" value="eno"/>
    <property type="match status" value="1"/>
</dbReference>
<dbReference type="PANTHER" id="PTHR11902">
    <property type="entry name" value="ENOLASE"/>
    <property type="match status" value="1"/>
</dbReference>
<dbReference type="PANTHER" id="PTHR11902:SF1">
    <property type="entry name" value="ENOLASE"/>
    <property type="match status" value="1"/>
</dbReference>
<dbReference type="Pfam" id="PF00113">
    <property type="entry name" value="Enolase_C"/>
    <property type="match status" value="1"/>
</dbReference>
<dbReference type="Pfam" id="PF03952">
    <property type="entry name" value="Enolase_N"/>
    <property type="match status" value="1"/>
</dbReference>
<dbReference type="PIRSF" id="PIRSF001400">
    <property type="entry name" value="Enolase"/>
    <property type="match status" value="1"/>
</dbReference>
<dbReference type="PRINTS" id="PR00148">
    <property type="entry name" value="ENOLASE"/>
</dbReference>
<dbReference type="SFLD" id="SFLDS00001">
    <property type="entry name" value="Enolase"/>
    <property type="match status" value="1"/>
</dbReference>
<dbReference type="SFLD" id="SFLDF00002">
    <property type="entry name" value="enolase"/>
    <property type="match status" value="1"/>
</dbReference>
<dbReference type="SMART" id="SM01192">
    <property type="entry name" value="Enolase_C"/>
    <property type="match status" value="1"/>
</dbReference>
<dbReference type="SMART" id="SM01193">
    <property type="entry name" value="Enolase_N"/>
    <property type="match status" value="1"/>
</dbReference>
<dbReference type="SUPFAM" id="SSF51604">
    <property type="entry name" value="Enolase C-terminal domain-like"/>
    <property type="match status" value="1"/>
</dbReference>
<dbReference type="SUPFAM" id="SSF54826">
    <property type="entry name" value="Enolase N-terminal domain-like"/>
    <property type="match status" value="1"/>
</dbReference>
<dbReference type="PROSITE" id="PS00164">
    <property type="entry name" value="ENOLASE"/>
    <property type="match status" value="1"/>
</dbReference>
<reference key="1">
    <citation type="submission" date="2006-12" db="EMBL/GenBank/DDBJ databases">
        <authorList>
            <person name="Fouts D.E."/>
            <person name="Nelson K.E."/>
            <person name="Sebastian Y."/>
        </authorList>
    </citation>
    <scope>NUCLEOTIDE SEQUENCE [LARGE SCALE GENOMIC DNA]</scope>
    <source>
        <strain>81-176</strain>
    </source>
</reference>
<reference key="2">
    <citation type="journal article" date="1994" name="Infect. Immun.">
        <title>Development and characterization of recA mutants of Campylobacter jejuni for inclusion in attenuated vaccines.</title>
        <authorList>
            <person name="Guerry P."/>
            <person name="Pope P.M."/>
            <person name="Burr D.H."/>
            <person name="Leifer J."/>
            <person name="Joseph S.W."/>
            <person name="Bourgeois A.L."/>
        </authorList>
    </citation>
    <scope>NUCLEOTIDE SEQUENCE [GENOMIC DNA] OF 1-34</scope>
</reference>
<name>ENO_CAMJJ</name>
<accession>A1W1S4</accession>
<proteinExistence type="inferred from homology"/>
<protein>
    <recommendedName>
        <fullName evidence="1">Enolase</fullName>
        <ecNumber evidence="1">4.2.1.11</ecNumber>
    </recommendedName>
    <alternativeName>
        <fullName evidence="1">2-phospho-D-glycerate hydro-lyase</fullName>
    </alternativeName>
    <alternativeName>
        <fullName evidence="1">2-phosphoglycerate dehydratase</fullName>
    </alternativeName>
</protein>
<evidence type="ECO:0000255" key="1">
    <source>
        <dbReference type="HAMAP-Rule" id="MF_00318"/>
    </source>
</evidence>
<comment type="function">
    <text evidence="1">Catalyzes the reversible conversion of 2-phosphoglycerate (2-PG) into phosphoenolpyruvate (PEP). It is essential for the degradation of carbohydrates via glycolysis.</text>
</comment>
<comment type="catalytic activity">
    <reaction evidence="1">
        <text>(2R)-2-phosphoglycerate = phosphoenolpyruvate + H2O</text>
        <dbReference type="Rhea" id="RHEA:10164"/>
        <dbReference type="ChEBI" id="CHEBI:15377"/>
        <dbReference type="ChEBI" id="CHEBI:58289"/>
        <dbReference type="ChEBI" id="CHEBI:58702"/>
        <dbReference type="EC" id="4.2.1.11"/>
    </reaction>
</comment>
<comment type="cofactor">
    <cofactor evidence="1">
        <name>Mg(2+)</name>
        <dbReference type="ChEBI" id="CHEBI:18420"/>
    </cofactor>
    <text evidence="1">Binds a second Mg(2+) ion via substrate during catalysis.</text>
</comment>
<comment type="pathway">
    <text evidence="1">Carbohydrate degradation; glycolysis; pyruvate from D-glyceraldehyde 3-phosphate: step 4/5.</text>
</comment>
<comment type="subcellular location">
    <subcellularLocation>
        <location evidence="1">Cytoplasm</location>
    </subcellularLocation>
    <subcellularLocation>
        <location evidence="1">Secreted</location>
    </subcellularLocation>
    <subcellularLocation>
        <location evidence="1">Cell surface</location>
    </subcellularLocation>
    <text evidence="1">Fractions of enolase are present in both the cytoplasm and on the cell surface.</text>
</comment>
<comment type="similarity">
    <text evidence="1">Belongs to the enolase family.</text>
</comment>
<gene>
    <name evidence="1" type="primary">eno</name>
    <name type="ordered locus">CJJ81176_1668</name>
</gene>
<sequence>MLVIEDVRAYEVLDSRGNPTVKAEVTLSDGSVGAAIVPSGASTGSKEALELRDNDERFGGKGVLKAVANVNETIADEILGLDAFNQTQLDDTLRELDGTNNYSNLGANATLGVSMATARAAAAALGMPLYRYLGGANASILPVPMCNIINGGAHANNNVDFQEFMIMPFGFTSFKEALRSVCEIYAILKKELANSGHSTALGDEGGFAPNLANNTEPIDLLMTCIKKAGYENRVKIALDVASTEFFKDGKYHMEGKAFSSEDLIERYVELCAKYPICSIEDGLAENDFEGWIKLTEKLGNKIQLVGDDLFVTNEDILREGIIKKMANAVLIKPNQIGTITQTMRTVRLAQRNNYKCVMSHRSGESEDAFIADFAVALNTGQIKTGALARGERTAKYNRLLEIELESDEYLGEKL</sequence>
<feature type="chain" id="PRO_0000281901" description="Enolase">
    <location>
        <begin position="1"/>
        <end position="414"/>
    </location>
</feature>
<feature type="active site" description="Proton donor" evidence="1">
    <location>
        <position position="204"/>
    </location>
</feature>
<feature type="active site" description="Proton acceptor" evidence="1">
    <location>
        <position position="332"/>
    </location>
</feature>
<feature type="binding site" evidence="1">
    <location>
        <position position="162"/>
    </location>
    <ligand>
        <name>(2R)-2-phosphoglycerate</name>
        <dbReference type="ChEBI" id="CHEBI:58289"/>
    </ligand>
</feature>
<feature type="binding site" evidence="1">
    <location>
        <position position="239"/>
    </location>
    <ligand>
        <name>Mg(2+)</name>
        <dbReference type="ChEBI" id="CHEBI:18420"/>
    </ligand>
</feature>
<feature type="binding site" evidence="1">
    <location>
        <position position="280"/>
    </location>
    <ligand>
        <name>Mg(2+)</name>
        <dbReference type="ChEBI" id="CHEBI:18420"/>
    </ligand>
</feature>
<feature type="binding site" evidence="1">
    <location>
        <position position="307"/>
    </location>
    <ligand>
        <name>Mg(2+)</name>
        <dbReference type="ChEBI" id="CHEBI:18420"/>
    </ligand>
</feature>
<feature type="binding site" evidence="1">
    <location>
        <position position="332"/>
    </location>
    <ligand>
        <name>(2R)-2-phosphoglycerate</name>
        <dbReference type="ChEBI" id="CHEBI:58289"/>
    </ligand>
</feature>
<feature type="binding site" evidence="1">
    <location>
        <position position="361"/>
    </location>
    <ligand>
        <name>(2R)-2-phosphoglycerate</name>
        <dbReference type="ChEBI" id="CHEBI:58289"/>
    </ligand>
</feature>
<feature type="binding site" evidence="1">
    <location>
        <position position="362"/>
    </location>
    <ligand>
        <name>(2R)-2-phosphoglycerate</name>
        <dbReference type="ChEBI" id="CHEBI:58289"/>
    </ligand>
</feature>
<feature type="binding site" evidence="1">
    <location>
        <position position="383"/>
    </location>
    <ligand>
        <name>(2R)-2-phosphoglycerate</name>
        <dbReference type="ChEBI" id="CHEBI:58289"/>
    </ligand>
</feature>
<organism>
    <name type="scientific">Campylobacter jejuni subsp. jejuni serotype O:23/36 (strain 81-176)</name>
    <dbReference type="NCBI Taxonomy" id="354242"/>
    <lineage>
        <taxon>Bacteria</taxon>
        <taxon>Pseudomonadati</taxon>
        <taxon>Campylobacterota</taxon>
        <taxon>Epsilonproteobacteria</taxon>
        <taxon>Campylobacterales</taxon>
        <taxon>Campylobacteraceae</taxon>
        <taxon>Campylobacter</taxon>
    </lineage>
</organism>
<keyword id="KW-0963">Cytoplasm</keyword>
<keyword id="KW-0324">Glycolysis</keyword>
<keyword id="KW-0456">Lyase</keyword>
<keyword id="KW-0460">Magnesium</keyword>
<keyword id="KW-0479">Metal-binding</keyword>
<keyword id="KW-0964">Secreted</keyword>